<name>Y667_RHOP2</name>
<proteinExistence type="inferred from homology"/>
<accession>Q2J2D2</accession>
<dbReference type="EMBL" id="CP000250">
    <property type="protein sequence ID" value="ABD05378.1"/>
    <property type="molecule type" value="Genomic_DNA"/>
</dbReference>
<dbReference type="RefSeq" id="WP_011439568.1">
    <property type="nucleotide sequence ID" value="NC_007778.1"/>
</dbReference>
<dbReference type="SMR" id="Q2J2D2"/>
<dbReference type="STRING" id="316058.RPB_0667"/>
<dbReference type="KEGG" id="rpb:RPB_0667"/>
<dbReference type="eggNOG" id="COG0718">
    <property type="taxonomic scope" value="Bacteria"/>
</dbReference>
<dbReference type="HOGENOM" id="CLU_140930_0_1_5"/>
<dbReference type="OrthoDB" id="9803080at2"/>
<dbReference type="Proteomes" id="UP000008809">
    <property type="component" value="Chromosome"/>
</dbReference>
<dbReference type="GO" id="GO:0043590">
    <property type="term" value="C:bacterial nucleoid"/>
    <property type="evidence" value="ECO:0007669"/>
    <property type="project" value="UniProtKB-UniRule"/>
</dbReference>
<dbReference type="GO" id="GO:0005829">
    <property type="term" value="C:cytosol"/>
    <property type="evidence" value="ECO:0007669"/>
    <property type="project" value="TreeGrafter"/>
</dbReference>
<dbReference type="GO" id="GO:0003677">
    <property type="term" value="F:DNA binding"/>
    <property type="evidence" value="ECO:0007669"/>
    <property type="project" value="UniProtKB-UniRule"/>
</dbReference>
<dbReference type="Gene3D" id="3.30.1310.10">
    <property type="entry name" value="Nucleoid-associated protein YbaB-like domain"/>
    <property type="match status" value="1"/>
</dbReference>
<dbReference type="HAMAP" id="MF_00274">
    <property type="entry name" value="DNA_YbaB_EbfC"/>
    <property type="match status" value="1"/>
</dbReference>
<dbReference type="InterPro" id="IPR036894">
    <property type="entry name" value="YbaB-like_sf"/>
</dbReference>
<dbReference type="InterPro" id="IPR004401">
    <property type="entry name" value="YbaB/EbfC"/>
</dbReference>
<dbReference type="NCBIfam" id="TIGR00103">
    <property type="entry name" value="DNA_YbaB_EbfC"/>
    <property type="match status" value="1"/>
</dbReference>
<dbReference type="PANTHER" id="PTHR33449">
    <property type="entry name" value="NUCLEOID-ASSOCIATED PROTEIN YBAB"/>
    <property type="match status" value="1"/>
</dbReference>
<dbReference type="PANTHER" id="PTHR33449:SF1">
    <property type="entry name" value="NUCLEOID-ASSOCIATED PROTEIN YBAB"/>
    <property type="match status" value="1"/>
</dbReference>
<dbReference type="Pfam" id="PF02575">
    <property type="entry name" value="YbaB_DNA_bd"/>
    <property type="match status" value="1"/>
</dbReference>
<dbReference type="PIRSF" id="PIRSF004555">
    <property type="entry name" value="UCP004555"/>
    <property type="match status" value="1"/>
</dbReference>
<dbReference type="SUPFAM" id="SSF82607">
    <property type="entry name" value="YbaB-like"/>
    <property type="match status" value="1"/>
</dbReference>
<keyword id="KW-0963">Cytoplasm</keyword>
<keyword id="KW-0238">DNA-binding</keyword>
<keyword id="KW-1185">Reference proteome</keyword>
<organism>
    <name type="scientific">Rhodopseudomonas palustris (strain HaA2)</name>
    <dbReference type="NCBI Taxonomy" id="316058"/>
    <lineage>
        <taxon>Bacteria</taxon>
        <taxon>Pseudomonadati</taxon>
        <taxon>Pseudomonadota</taxon>
        <taxon>Alphaproteobacteria</taxon>
        <taxon>Hyphomicrobiales</taxon>
        <taxon>Nitrobacteraceae</taxon>
        <taxon>Rhodopseudomonas</taxon>
    </lineage>
</organism>
<protein>
    <recommendedName>
        <fullName evidence="1">Nucleoid-associated protein RPB_0667</fullName>
    </recommendedName>
</protein>
<evidence type="ECO:0000255" key="1">
    <source>
        <dbReference type="HAMAP-Rule" id="MF_00274"/>
    </source>
</evidence>
<comment type="function">
    <text evidence="1">Binds to DNA and alters its conformation. May be involved in regulation of gene expression, nucleoid organization and DNA protection.</text>
</comment>
<comment type="subunit">
    <text evidence="1">Homodimer.</text>
</comment>
<comment type="subcellular location">
    <subcellularLocation>
        <location evidence="1">Cytoplasm</location>
        <location evidence="1">Nucleoid</location>
    </subcellularLocation>
</comment>
<comment type="similarity">
    <text evidence="1">Belongs to the YbaB/EbfC family.</text>
</comment>
<sequence length="106" mass="11107">MADFLGMMKQAAQLQSKMKAMQAELDQIEVEGLSGGGLVKIRMSAKMEVRGVSIDPSLLKADEGEVLEDLLVAALADAHRKAEAAMQEKMQALTGGLGLPPGLGLG</sequence>
<reference key="1">
    <citation type="submission" date="2006-01" db="EMBL/GenBank/DDBJ databases">
        <title>Complete sequence of Rhodopseudomonas palustris HaA2.</title>
        <authorList>
            <consortium name="US DOE Joint Genome Institute"/>
            <person name="Copeland A."/>
            <person name="Lucas S."/>
            <person name="Lapidus A."/>
            <person name="Barry K."/>
            <person name="Detter J.C."/>
            <person name="Glavina T."/>
            <person name="Hammon N."/>
            <person name="Israni S."/>
            <person name="Pitluck S."/>
            <person name="Chain P."/>
            <person name="Malfatti S."/>
            <person name="Shin M."/>
            <person name="Vergez L."/>
            <person name="Schmutz J."/>
            <person name="Larimer F."/>
            <person name="Land M."/>
            <person name="Hauser L."/>
            <person name="Pelletier D.A."/>
            <person name="Kyrpides N."/>
            <person name="Anderson I."/>
            <person name="Oda Y."/>
            <person name="Harwood C.S."/>
            <person name="Richardson P."/>
        </authorList>
    </citation>
    <scope>NUCLEOTIDE SEQUENCE [LARGE SCALE GENOMIC DNA]</scope>
    <source>
        <strain>HaA2</strain>
    </source>
</reference>
<gene>
    <name type="ordered locus">RPB_0667</name>
</gene>
<feature type="chain" id="PRO_1000003807" description="Nucleoid-associated protein RPB_0667">
    <location>
        <begin position="1"/>
        <end position="106"/>
    </location>
</feature>